<protein>
    <recommendedName>
        <fullName>Manganese transport system membrane protein MntC</fullName>
    </recommendedName>
</protein>
<evidence type="ECO:0000255" key="1"/>
<evidence type="ECO:0000269" key="2">
    <source>
    </source>
</evidence>
<evidence type="ECO:0000303" key="3">
    <source>
    </source>
</evidence>
<evidence type="ECO:0000305" key="4"/>
<evidence type="ECO:0000305" key="5">
    <source>
    </source>
</evidence>
<keyword id="KW-1003">Cell membrane</keyword>
<keyword id="KW-0406">Ion transport</keyword>
<keyword id="KW-0472">Membrane</keyword>
<keyword id="KW-1185">Reference proteome</keyword>
<keyword id="KW-0812">Transmembrane</keyword>
<keyword id="KW-1133">Transmembrane helix</keyword>
<keyword id="KW-0813">Transport</keyword>
<dbReference type="EMBL" id="AF008220">
    <property type="protein sequence ID" value="AAC00231.1"/>
    <property type="molecule type" value="Genomic_DNA"/>
</dbReference>
<dbReference type="EMBL" id="AL009126">
    <property type="protein sequence ID" value="CAB15053.1"/>
    <property type="molecule type" value="Genomic_DNA"/>
</dbReference>
<dbReference type="PIR" id="D69992">
    <property type="entry name" value="D69992"/>
</dbReference>
<dbReference type="RefSeq" id="NP_390953.1">
    <property type="nucleotide sequence ID" value="NC_000964.3"/>
</dbReference>
<dbReference type="RefSeq" id="WP_003229064.1">
    <property type="nucleotide sequence ID" value="NZ_OZ025638.1"/>
</dbReference>
<dbReference type="SMR" id="O35024"/>
<dbReference type="FunCoup" id="O35024">
    <property type="interactions" value="171"/>
</dbReference>
<dbReference type="STRING" id="224308.BSU30750"/>
<dbReference type="PaxDb" id="224308-BSU30750"/>
<dbReference type="EnsemblBacteria" id="CAB15053">
    <property type="protein sequence ID" value="CAB15053"/>
    <property type="gene ID" value="BSU_30750"/>
</dbReference>
<dbReference type="GeneID" id="937203"/>
<dbReference type="KEGG" id="bsu:BSU30750"/>
<dbReference type="PATRIC" id="fig|224308.179.peg.3333"/>
<dbReference type="eggNOG" id="COG1108">
    <property type="taxonomic scope" value="Bacteria"/>
</dbReference>
<dbReference type="eggNOG" id="COG1321">
    <property type="taxonomic scope" value="Bacteria"/>
</dbReference>
<dbReference type="InParanoid" id="O35024"/>
<dbReference type="OrthoDB" id="9788905at2"/>
<dbReference type="PhylomeDB" id="O35024"/>
<dbReference type="BioCyc" id="BSUB:BSU30750-MONOMER"/>
<dbReference type="Proteomes" id="UP000001570">
    <property type="component" value="Chromosome"/>
</dbReference>
<dbReference type="GO" id="GO:0043190">
    <property type="term" value="C:ATP-binding cassette (ABC) transporter complex"/>
    <property type="evidence" value="ECO:0007669"/>
    <property type="project" value="InterPro"/>
</dbReference>
<dbReference type="GO" id="GO:0005886">
    <property type="term" value="C:plasma membrane"/>
    <property type="evidence" value="ECO:0000318"/>
    <property type="project" value="GO_Central"/>
</dbReference>
<dbReference type="GO" id="GO:0006811">
    <property type="term" value="P:monoatomic ion transport"/>
    <property type="evidence" value="ECO:0007669"/>
    <property type="project" value="UniProtKB-KW"/>
</dbReference>
<dbReference type="GO" id="GO:0010043">
    <property type="term" value="P:response to zinc ion"/>
    <property type="evidence" value="ECO:0000318"/>
    <property type="project" value="GO_Central"/>
</dbReference>
<dbReference type="GO" id="GO:0055085">
    <property type="term" value="P:transmembrane transport"/>
    <property type="evidence" value="ECO:0007669"/>
    <property type="project" value="InterPro"/>
</dbReference>
<dbReference type="CDD" id="cd06550">
    <property type="entry name" value="TM_ABC_iron-siderophores_like"/>
    <property type="match status" value="1"/>
</dbReference>
<dbReference type="FunFam" id="1.10.3470.10:FF:000031">
    <property type="entry name" value="Manganese ABC transporter, membrane protein"/>
    <property type="match status" value="1"/>
</dbReference>
<dbReference type="Gene3D" id="1.10.3470.10">
    <property type="entry name" value="ABC transporter involved in vitamin B12 uptake, BtuC"/>
    <property type="match status" value="1"/>
</dbReference>
<dbReference type="Gene3D" id="1.10.10.10">
    <property type="entry name" value="Winged helix-like DNA-binding domain superfamily/Winged helix DNA-binding domain"/>
    <property type="match status" value="1"/>
</dbReference>
<dbReference type="InterPro" id="IPR037294">
    <property type="entry name" value="ABC_BtuC-like"/>
</dbReference>
<dbReference type="InterPro" id="IPR001626">
    <property type="entry name" value="ABC_TroCD"/>
</dbReference>
<dbReference type="InterPro" id="IPR036388">
    <property type="entry name" value="WH-like_DNA-bd_sf"/>
</dbReference>
<dbReference type="InterPro" id="IPR036390">
    <property type="entry name" value="WH_DNA-bd_sf"/>
</dbReference>
<dbReference type="PANTHER" id="PTHR30477">
    <property type="entry name" value="ABC-TRANSPORTER METAL-BINDING PROTEIN"/>
    <property type="match status" value="1"/>
</dbReference>
<dbReference type="PANTHER" id="PTHR30477:SF3">
    <property type="entry name" value="METAL TRANSPORT SYSTEM MEMBRANE PROTEIN CT_069-RELATED"/>
    <property type="match status" value="1"/>
</dbReference>
<dbReference type="Pfam" id="PF00950">
    <property type="entry name" value="ABC-3"/>
    <property type="match status" value="1"/>
</dbReference>
<dbReference type="SUPFAM" id="SSF81345">
    <property type="entry name" value="ABC transporter involved in vitamin B12 uptake, BtuC"/>
    <property type="match status" value="1"/>
</dbReference>
<dbReference type="SUPFAM" id="SSF46785">
    <property type="entry name" value="Winged helix' DNA-binding domain"/>
    <property type="match status" value="1"/>
</dbReference>
<feature type="chain" id="PRO_0000171150" description="Manganese transport system membrane protein MntC">
    <location>
        <begin position="1"/>
        <end position="435"/>
    </location>
</feature>
<feature type="transmembrane region" description="Helical" evidence="1">
    <location>
        <begin position="17"/>
        <end position="37"/>
    </location>
</feature>
<feature type="transmembrane region" description="Helical" evidence="1">
    <location>
        <begin position="42"/>
        <end position="62"/>
    </location>
</feature>
<feature type="transmembrane region" description="Helical" evidence="1">
    <location>
        <begin position="68"/>
        <end position="88"/>
    </location>
</feature>
<feature type="transmembrane region" description="Helical" evidence="1">
    <location>
        <begin position="98"/>
        <end position="118"/>
    </location>
</feature>
<feature type="transmembrane region" description="Helical" evidence="1">
    <location>
        <begin position="143"/>
        <end position="163"/>
    </location>
</feature>
<feature type="transmembrane region" description="Helical" evidence="1">
    <location>
        <begin position="166"/>
        <end position="186"/>
    </location>
</feature>
<feature type="transmembrane region" description="Helical" evidence="1">
    <location>
        <begin position="189"/>
        <end position="209"/>
    </location>
</feature>
<feature type="transmembrane region" description="Helical" evidence="1">
    <location>
        <begin position="228"/>
        <end position="248"/>
    </location>
</feature>
<feature type="transmembrane region" description="Helical" evidence="1">
    <location>
        <begin position="255"/>
        <end position="275"/>
    </location>
</feature>
<sequence>MFESLWLQLQHPNTQWVLAGTLLLGTASGVLGSFVLLRKQSLIGDAMAHSALPGVCLAFLFTGQKSLPFFLLGAALAGLLGTFCIQLIPRLSKTKEDSAIGIVLSVFFGVGIILLTYIQQQGAGSQSGLDSFLFGQAASLVRQDIILIAGISAVLLLLCIVFFKEFTLITFDLAFAKGLGIPVRFLNGLLACLIVCAVVIGLQTVGVILMAAMLITPAITARYWTERLTGMIIIAGITGGVSGVAGTLLSTTMKGMATGPLMILSATLLFLFSMICAPKRGLAAKAIRLMRLRRRTSREQVLLAIYEQYEKNNLCVTVESVRKKRRLSPSLCLKALNDLEQERCIERIENGIWQITSKGIEKGYHTALKQRMYEVYLMHEMELANIESDQDYFDPDRLPRETRERLYSLLKLYGRMPERRKASHDAEKGQIANEF</sequence>
<accession>O35024</accession>
<gene>
    <name evidence="3" type="primary">mntC</name>
    <name type="synonym">ytgC</name>
    <name type="ordered locus">BSU30750</name>
</gene>
<proteinExistence type="evidence at transcript level"/>
<organism>
    <name type="scientific">Bacillus subtilis (strain 168)</name>
    <dbReference type="NCBI Taxonomy" id="224308"/>
    <lineage>
        <taxon>Bacteria</taxon>
        <taxon>Bacillati</taxon>
        <taxon>Bacillota</taxon>
        <taxon>Bacilli</taxon>
        <taxon>Bacillales</taxon>
        <taxon>Bacillaceae</taxon>
        <taxon>Bacillus</taxon>
    </lineage>
</organism>
<reference key="1">
    <citation type="journal article" date="1997" name="Microbiology">
        <title>Sequencing and functional annotation of the Bacillus subtilis genes in the 200 kb rrnB-dnaB region.</title>
        <authorList>
            <person name="Lapidus A."/>
            <person name="Galleron N."/>
            <person name="Sorokin A."/>
            <person name="Ehrlich S.D."/>
        </authorList>
    </citation>
    <scope>NUCLEOTIDE SEQUENCE [GENOMIC DNA]</scope>
    <source>
        <strain>168</strain>
    </source>
</reference>
<reference key="2">
    <citation type="journal article" date="1997" name="Nature">
        <title>The complete genome sequence of the Gram-positive bacterium Bacillus subtilis.</title>
        <authorList>
            <person name="Kunst F."/>
            <person name="Ogasawara N."/>
            <person name="Moszer I."/>
            <person name="Albertini A.M."/>
            <person name="Alloni G."/>
            <person name="Azevedo V."/>
            <person name="Bertero M.G."/>
            <person name="Bessieres P."/>
            <person name="Bolotin A."/>
            <person name="Borchert S."/>
            <person name="Borriss R."/>
            <person name="Boursier L."/>
            <person name="Brans A."/>
            <person name="Braun M."/>
            <person name="Brignell S.C."/>
            <person name="Bron S."/>
            <person name="Brouillet S."/>
            <person name="Bruschi C.V."/>
            <person name="Caldwell B."/>
            <person name="Capuano V."/>
            <person name="Carter N.M."/>
            <person name="Choi S.-K."/>
            <person name="Codani J.-J."/>
            <person name="Connerton I.F."/>
            <person name="Cummings N.J."/>
            <person name="Daniel R.A."/>
            <person name="Denizot F."/>
            <person name="Devine K.M."/>
            <person name="Duesterhoeft A."/>
            <person name="Ehrlich S.D."/>
            <person name="Emmerson P.T."/>
            <person name="Entian K.-D."/>
            <person name="Errington J."/>
            <person name="Fabret C."/>
            <person name="Ferrari E."/>
            <person name="Foulger D."/>
            <person name="Fritz C."/>
            <person name="Fujita M."/>
            <person name="Fujita Y."/>
            <person name="Fuma S."/>
            <person name="Galizzi A."/>
            <person name="Galleron N."/>
            <person name="Ghim S.-Y."/>
            <person name="Glaser P."/>
            <person name="Goffeau A."/>
            <person name="Golightly E.J."/>
            <person name="Grandi G."/>
            <person name="Guiseppi G."/>
            <person name="Guy B.J."/>
            <person name="Haga K."/>
            <person name="Haiech J."/>
            <person name="Harwood C.R."/>
            <person name="Henaut A."/>
            <person name="Hilbert H."/>
            <person name="Holsappel S."/>
            <person name="Hosono S."/>
            <person name="Hullo M.-F."/>
            <person name="Itaya M."/>
            <person name="Jones L.-M."/>
            <person name="Joris B."/>
            <person name="Karamata D."/>
            <person name="Kasahara Y."/>
            <person name="Klaerr-Blanchard M."/>
            <person name="Klein C."/>
            <person name="Kobayashi Y."/>
            <person name="Koetter P."/>
            <person name="Koningstein G."/>
            <person name="Krogh S."/>
            <person name="Kumano M."/>
            <person name="Kurita K."/>
            <person name="Lapidus A."/>
            <person name="Lardinois S."/>
            <person name="Lauber J."/>
            <person name="Lazarevic V."/>
            <person name="Lee S.-M."/>
            <person name="Levine A."/>
            <person name="Liu H."/>
            <person name="Masuda S."/>
            <person name="Mauel C."/>
            <person name="Medigue C."/>
            <person name="Medina N."/>
            <person name="Mellado R.P."/>
            <person name="Mizuno M."/>
            <person name="Moestl D."/>
            <person name="Nakai S."/>
            <person name="Noback M."/>
            <person name="Noone D."/>
            <person name="O'Reilly M."/>
            <person name="Ogawa K."/>
            <person name="Ogiwara A."/>
            <person name="Oudega B."/>
            <person name="Park S.-H."/>
            <person name="Parro V."/>
            <person name="Pohl T.M."/>
            <person name="Portetelle D."/>
            <person name="Porwollik S."/>
            <person name="Prescott A.M."/>
            <person name="Presecan E."/>
            <person name="Pujic P."/>
            <person name="Purnelle B."/>
            <person name="Rapoport G."/>
            <person name="Rey M."/>
            <person name="Reynolds S."/>
            <person name="Rieger M."/>
            <person name="Rivolta C."/>
            <person name="Rocha E."/>
            <person name="Roche B."/>
            <person name="Rose M."/>
            <person name="Sadaie Y."/>
            <person name="Sato T."/>
            <person name="Scanlan E."/>
            <person name="Schleich S."/>
            <person name="Schroeter R."/>
            <person name="Scoffone F."/>
            <person name="Sekiguchi J."/>
            <person name="Sekowska A."/>
            <person name="Seror S.J."/>
            <person name="Serror P."/>
            <person name="Shin B.-S."/>
            <person name="Soldo B."/>
            <person name="Sorokin A."/>
            <person name="Tacconi E."/>
            <person name="Takagi T."/>
            <person name="Takahashi H."/>
            <person name="Takemaru K."/>
            <person name="Takeuchi M."/>
            <person name="Tamakoshi A."/>
            <person name="Tanaka T."/>
            <person name="Terpstra P."/>
            <person name="Tognoni A."/>
            <person name="Tosato V."/>
            <person name="Uchiyama S."/>
            <person name="Vandenbol M."/>
            <person name="Vannier F."/>
            <person name="Vassarotti A."/>
            <person name="Viari A."/>
            <person name="Wambutt R."/>
            <person name="Wedler E."/>
            <person name="Wedler H."/>
            <person name="Weitzenegger T."/>
            <person name="Winters P."/>
            <person name="Wipat A."/>
            <person name="Yamamoto H."/>
            <person name="Yamane K."/>
            <person name="Yasumoto K."/>
            <person name="Yata K."/>
            <person name="Yoshida K."/>
            <person name="Yoshikawa H.-F."/>
            <person name="Zumstein E."/>
            <person name="Yoshikawa H."/>
            <person name="Danchin A."/>
        </authorList>
    </citation>
    <scope>NUCLEOTIDE SEQUENCE [LARGE SCALE GENOMIC DNA]</scope>
    <source>
        <strain>168</strain>
    </source>
</reference>
<reference key="3">
    <citation type="journal article" date="2000" name="Mol. Microbiol.">
        <title>Manganese homeostasis in Bacillus subtilis is regulated by MntR, a bifunctional regulator related to the diphtheria toxin repressor family of proteins.</title>
        <authorList>
            <person name="Que Q."/>
            <person name="Helmann J.D."/>
        </authorList>
    </citation>
    <scope>POSSIBLE FUNCTION</scope>
</reference>
<reference key="4">
    <citation type="journal article" date="2003" name="Mol. Microbiol.">
        <title>The global transcriptional response of Bacillus subtilis to manganese involves the MntR, Fur, TnrA and sigmaB regulons.</title>
        <authorList>
            <person name="Guedon E."/>
            <person name="Moore C.M."/>
            <person name="Que Q."/>
            <person name="Wang T."/>
            <person name="Ye R.W."/>
            <person name="Helmann J.D."/>
        </authorList>
    </citation>
    <scope>INDUCTION</scope>
</reference>
<name>MNTC_BACSU</name>
<comment type="function">
    <text evidence="5">Probably part of the ABC transporter complex MntABCD involved in manganese import. Probably responsible for the translocation of the substrate across the membrane.</text>
</comment>
<comment type="subunit">
    <text evidence="5">The complex is probably composed of two ATP-binding proteins (MntB), two transmembrane proteins (MntC and MntD) and a solute-binding protein (MntA).</text>
</comment>
<comment type="subcellular location">
    <subcellularLocation>
        <location evidence="4">Cell membrane</location>
        <topology evidence="4">Multi-pass membrane protein</topology>
    </subcellularLocation>
</comment>
<comment type="induction">
    <text evidence="2">Repressed by MntR in the presence of manganese.</text>
</comment>
<comment type="similarity">
    <text evidence="4">Belongs to the ABC-3 integral membrane protein family.</text>
</comment>